<sequence>MSSIPISVEGFKQLEKELDRLKKERPGVIQAIKEAREEGDLSENAGYDAARERQGMLEARIKYIESRMAQFNVIDLDTISGDKVMFGATVKIEDLESGEEKEYTLLGPDEADYAKGSISVQSPVARAMLGKEEGDEIVVDAPRGKIHYEIVSIRFLGTKGQQR</sequence>
<name>GREA_NITV2</name>
<comment type="function">
    <text evidence="1">Necessary for efficient RNA polymerase transcription elongation past template-encoded arresting sites. The arresting sites in DNA have the property of trapping a certain fraction of elongating RNA polymerases that pass through, resulting in locked ternary complexes. Cleavage of the nascent transcript by cleavage factors such as GreA or GreB allows the resumption of elongation from the new 3'terminus. GreA releases sequences of 2 to 3 nucleotides.</text>
</comment>
<comment type="similarity">
    <text evidence="1">Belongs to the GreA/GreB family.</text>
</comment>
<reference key="1">
    <citation type="journal article" date="2004" name="Nat. Biotechnol.">
        <title>The genome sequence of the anaerobic, sulfate-reducing bacterium Desulfovibrio vulgaris Hildenborough.</title>
        <authorList>
            <person name="Heidelberg J.F."/>
            <person name="Seshadri R."/>
            <person name="Haveman S.A."/>
            <person name="Hemme C.L."/>
            <person name="Paulsen I.T."/>
            <person name="Kolonay J.F."/>
            <person name="Eisen J.A."/>
            <person name="Ward N.L."/>
            <person name="Methe B.A."/>
            <person name="Brinkac L.M."/>
            <person name="Daugherty S.C."/>
            <person name="DeBoy R.T."/>
            <person name="Dodson R.J."/>
            <person name="Durkin A.S."/>
            <person name="Madupu R."/>
            <person name="Nelson W.C."/>
            <person name="Sullivan S.A."/>
            <person name="Fouts D.E."/>
            <person name="Haft D.H."/>
            <person name="Selengut J."/>
            <person name="Peterson J.D."/>
            <person name="Davidsen T.M."/>
            <person name="Zafar N."/>
            <person name="Zhou L."/>
            <person name="Radune D."/>
            <person name="Dimitrov G."/>
            <person name="Hance M."/>
            <person name="Tran K."/>
            <person name="Khouri H.M."/>
            <person name="Gill J."/>
            <person name="Utterback T.R."/>
            <person name="Feldblyum T.V."/>
            <person name="Wall J.D."/>
            <person name="Voordouw G."/>
            <person name="Fraser C.M."/>
        </authorList>
    </citation>
    <scope>NUCLEOTIDE SEQUENCE [LARGE SCALE GENOMIC DNA]</scope>
    <source>
        <strain>ATCC 29579 / DSM 644 / CCUG 34227 / NCIMB 8303 / VKM B-1760 / Hildenborough</strain>
    </source>
</reference>
<proteinExistence type="inferred from homology"/>
<organism>
    <name type="scientific">Nitratidesulfovibrio vulgaris (strain ATCC 29579 / DSM 644 / CCUG 34227 / NCIMB 8303 / VKM B-1760 / Hildenborough)</name>
    <name type="common">Desulfovibrio vulgaris</name>
    <dbReference type="NCBI Taxonomy" id="882"/>
    <lineage>
        <taxon>Bacteria</taxon>
        <taxon>Pseudomonadati</taxon>
        <taxon>Thermodesulfobacteriota</taxon>
        <taxon>Desulfovibrionia</taxon>
        <taxon>Desulfovibrionales</taxon>
        <taxon>Desulfovibrionaceae</taxon>
        <taxon>Nitratidesulfovibrio</taxon>
    </lineage>
</organism>
<gene>
    <name evidence="1" type="primary">greA</name>
    <name type="ordered locus">DVU_3245</name>
</gene>
<keyword id="KW-0175">Coiled coil</keyword>
<keyword id="KW-0238">DNA-binding</keyword>
<keyword id="KW-1185">Reference proteome</keyword>
<keyword id="KW-0804">Transcription</keyword>
<keyword id="KW-0805">Transcription regulation</keyword>
<feature type="chain" id="PRO_1000034258" description="Transcription elongation factor GreA">
    <location>
        <begin position="1"/>
        <end position="163"/>
    </location>
</feature>
<feature type="coiled-coil region" evidence="1">
    <location>
        <begin position="11"/>
        <end position="38"/>
    </location>
</feature>
<evidence type="ECO:0000255" key="1">
    <source>
        <dbReference type="HAMAP-Rule" id="MF_00105"/>
    </source>
</evidence>
<dbReference type="EMBL" id="AE017285">
    <property type="protein sequence ID" value="AAS97715.1"/>
    <property type="molecule type" value="Genomic_DNA"/>
</dbReference>
<dbReference type="RefSeq" id="WP_010940503.1">
    <property type="nucleotide sequence ID" value="NC_002937.3"/>
</dbReference>
<dbReference type="RefSeq" id="YP_012455.1">
    <property type="nucleotide sequence ID" value="NC_002937.3"/>
</dbReference>
<dbReference type="SMR" id="Q725M4"/>
<dbReference type="STRING" id="882.DVU_3245"/>
<dbReference type="PaxDb" id="882-DVU_3245"/>
<dbReference type="EnsemblBacteria" id="AAS97715">
    <property type="protein sequence ID" value="AAS97715"/>
    <property type="gene ID" value="DVU_3245"/>
</dbReference>
<dbReference type="KEGG" id="dvu:DVU_3245"/>
<dbReference type="PATRIC" id="fig|882.5.peg.2951"/>
<dbReference type="eggNOG" id="COG0782">
    <property type="taxonomic scope" value="Bacteria"/>
</dbReference>
<dbReference type="HOGENOM" id="CLU_101379_2_0_7"/>
<dbReference type="OrthoDB" id="9808774at2"/>
<dbReference type="PhylomeDB" id="Q725M4"/>
<dbReference type="Proteomes" id="UP000002194">
    <property type="component" value="Chromosome"/>
</dbReference>
<dbReference type="GO" id="GO:0003677">
    <property type="term" value="F:DNA binding"/>
    <property type="evidence" value="ECO:0007669"/>
    <property type="project" value="UniProtKB-UniRule"/>
</dbReference>
<dbReference type="GO" id="GO:0070063">
    <property type="term" value="F:RNA polymerase binding"/>
    <property type="evidence" value="ECO:0007669"/>
    <property type="project" value="InterPro"/>
</dbReference>
<dbReference type="GO" id="GO:0006354">
    <property type="term" value="P:DNA-templated transcription elongation"/>
    <property type="evidence" value="ECO:0007669"/>
    <property type="project" value="TreeGrafter"/>
</dbReference>
<dbReference type="GO" id="GO:0032784">
    <property type="term" value="P:regulation of DNA-templated transcription elongation"/>
    <property type="evidence" value="ECO:0007669"/>
    <property type="project" value="UniProtKB-UniRule"/>
</dbReference>
<dbReference type="FunFam" id="1.10.287.180:FF:000001">
    <property type="entry name" value="Transcription elongation factor GreA"/>
    <property type="match status" value="1"/>
</dbReference>
<dbReference type="FunFam" id="3.10.50.30:FF:000001">
    <property type="entry name" value="Transcription elongation factor GreA"/>
    <property type="match status" value="1"/>
</dbReference>
<dbReference type="Gene3D" id="3.10.50.30">
    <property type="entry name" value="Transcription elongation factor, GreA/GreB, C-terminal domain"/>
    <property type="match status" value="1"/>
</dbReference>
<dbReference type="Gene3D" id="1.10.287.180">
    <property type="entry name" value="Transcription elongation factor, GreA/GreB, N-terminal domain"/>
    <property type="match status" value="1"/>
</dbReference>
<dbReference type="HAMAP" id="MF_00105">
    <property type="entry name" value="GreA_GreB"/>
    <property type="match status" value="1"/>
</dbReference>
<dbReference type="InterPro" id="IPR036953">
    <property type="entry name" value="GreA/GreB_C_sf"/>
</dbReference>
<dbReference type="InterPro" id="IPR018151">
    <property type="entry name" value="TF_GreA/GreB_CS"/>
</dbReference>
<dbReference type="InterPro" id="IPR006359">
    <property type="entry name" value="Tscrpt_elong_fac_GreA"/>
</dbReference>
<dbReference type="InterPro" id="IPR028624">
    <property type="entry name" value="Tscrpt_elong_fac_GreA/B"/>
</dbReference>
<dbReference type="InterPro" id="IPR001437">
    <property type="entry name" value="Tscrpt_elong_fac_GreA/B_C"/>
</dbReference>
<dbReference type="InterPro" id="IPR023459">
    <property type="entry name" value="Tscrpt_elong_fac_GreA/B_fam"/>
</dbReference>
<dbReference type="InterPro" id="IPR022691">
    <property type="entry name" value="Tscrpt_elong_fac_GreA/B_N"/>
</dbReference>
<dbReference type="InterPro" id="IPR036805">
    <property type="entry name" value="Tscrpt_elong_fac_GreA/B_N_sf"/>
</dbReference>
<dbReference type="NCBIfam" id="TIGR01462">
    <property type="entry name" value="greA"/>
    <property type="match status" value="1"/>
</dbReference>
<dbReference type="NCBIfam" id="NF001261">
    <property type="entry name" value="PRK00226.1-2"/>
    <property type="match status" value="1"/>
</dbReference>
<dbReference type="NCBIfam" id="NF001263">
    <property type="entry name" value="PRK00226.1-4"/>
    <property type="match status" value="1"/>
</dbReference>
<dbReference type="NCBIfam" id="NF001264">
    <property type="entry name" value="PRK00226.1-5"/>
    <property type="match status" value="1"/>
</dbReference>
<dbReference type="PANTHER" id="PTHR30437">
    <property type="entry name" value="TRANSCRIPTION ELONGATION FACTOR GREA"/>
    <property type="match status" value="1"/>
</dbReference>
<dbReference type="PANTHER" id="PTHR30437:SF4">
    <property type="entry name" value="TRANSCRIPTION ELONGATION FACTOR GREA"/>
    <property type="match status" value="1"/>
</dbReference>
<dbReference type="Pfam" id="PF01272">
    <property type="entry name" value="GreA_GreB"/>
    <property type="match status" value="1"/>
</dbReference>
<dbReference type="Pfam" id="PF03449">
    <property type="entry name" value="GreA_GreB_N"/>
    <property type="match status" value="1"/>
</dbReference>
<dbReference type="PIRSF" id="PIRSF006092">
    <property type="entry name" value="GreA_GreB"/>
    <property type="match status" value="1"/>
</dbReference>
<dbReference type="SUPFAM" id="SSF54534">
    <property type="entry name" value="FKBP-like"/>
    <property type="match status" value="1"/>
</dbReference>
<dbReference type="SUPFAM" id="SSF46557">
    <property type="entry name" value="GreA transcript cleavage protein, N-terminal domain"/>
    <property type="match status" value="1"/>
</dbReference>
<dbReference type="PROSITE" id="PS00829">
    <property type="entry name" value="GREAB_1"/>
    <property type="match status" value="1"/>
</dbReference>
<dbReference type="PROSITE" id="PS00830">
    <property type="entry name" value="GREAB_2"/>
    <property type="match status" value="1"/>
</dbReference>
<accession>Q725M4</accession>
<protein>
    <recommendedName>
        <fullName evidence="1">Transcription elongation factor GreA</fullName>
    </recommendedName>
    <alternativeName>
        <fullName evidence="1">Transcript cleavage factor GreA</fullName>
    </alternativeName>
</protein>